<protein>
    <recommendedName>
        <fullName evidence="1">dCTP deaminase</fullName>
        <ecNumber evidence="1">3.5.4.13</ecNumber>
    </recommendedName>
    <alternativeName>
        <fullName evidence="1">Deoxycytidine triphosphate deaminase</fullName>
    </alternativeName>
</protein>
<evidence type="ECO:0000255" key="1">
    <source>
        <dbReference type="HAMAP-Rule" id="MF_00146"/>
    </source>
</evidence>
<name>DCD_CAMLR</name>
<feature type="chain" id="PRO_1000123139" description="dCTP deaminase">
    <location>
        <begin position="1"/>
        <end position="186"/>
    </location>
</feature>
<feature type="active site" description="Proton donor/acceptor" evidence="1">
    <location>
        <position position="133"/>
    </location>
</feature>
<feature type="binding site" evidence="1">
    <location>
        <begin position="107"/>
        <end position="112"/>
    </location>
    <ligand>
        <name>dCTP</name>
        <dbReference type="ChEBI" id="CHEBI:61481"/>
    </ligand>
</feature>
<feature type="binding site" evidence="1">
    <location>
        <position position="152"/>
    </location>
    <ligand>
        <name>dCTP</name>
        <dbReference type="ChEBI" id="CHEBI:61481"/>
    </ligand>
</feature>
<feature type="binding site" evidence="1">
    <location>
        <position position="166"/>
    </location>
    <ligand>
        <name>dCTP</name>
        <dbReference type="ChEBI" id="CHEBI:61481"/>
    </ligand>
</feature>
<feature type="binding site" evidence="1">
    <location>
        <position position="176"/>
    </location>
    <ligand>
        <name>dCTP</name>
        <dbReference type="ChEBI" id="CHEBI:61481"/>
    </ligand>
</feature>
<reference key="1">
    <citation type="journal article" date="2008" name="Foodborne Pathog. Dis.">
        <title>The complete genome sequence and analysis of the human pathogen Campylobacter lari.</title>
        <authorList>
            <person name="Miller W.G."/>
            <person name="Wang G."/>
            <person name="Binnewies T.T."/>
            <person name="Parker C.T."/>
        </authorList>
    </citation>
    <scope>NUCLEOTIDE SEQUENCE [LARGE SCALE GENOMIC DNA]</scope>
    <source>
        <strain>RM2100 / D67 / ATCC BAA-1060</strain>
    </source>
</reference>
<gene>
    <name evidence="1" type="primary">dcd</name>
    <name type="ordered locus">Cla_1297</name>
</gene>
<sequence>MGLKADNWIKKMALEHNMIEPFCEANIGKGIVSYGLSSYGYDIRVGREFKIFTNVNSTVVDPKNFVEENVVDFVGDVCIVPANSFALARTVEYFKMPNDVLAICLGKSTYARCGIIVNVTPFEPGFEGHITIEISNTTPLPAKIYANEGIAQVLFLQGDEPCDVTYADKKGKYQAQTGITLPRILK</sequence>
<organism>
    <name type="scientific">Campylobacter lari (strain RM2100 / D67 / ATCC BAA-1060)</name>
    <dbReference type="NCBI Taxonomy" id="306263"/>
    <lineage>
        <taxon>Bacteria</taxon>
        <taxon>Pseudomonadati</taxon>
        <taxon>Campylobacterota</taxon>
        <taxon>Epsilonproteobacteria</taxon>
        <taxon>Campylobacterales</taxon>
        <taxon>Campylobacteraceae</taxon>
        <taxon>Campylobacter</taxon>
    </lineage>
</organism>
<keyword id="KW-0378">Hydrolase</keyword>
<keyword id="KW-0546">Nucleotide metabolism</keyword>
<keyword id="KW-0547">Nucleotide-binding</keyword>
<keyword id="KW-1185">Reference proteome</keyword>
<proteinExistence type="inferred from homology"/>
<accession>B9KDH6</accession>
<dbReference type="EC" id="3.5.4.13" evidence="1"/>
<dbReference type="EMBL" id="CP000932">
    <property type="protein sequence ID" value="ACM64614.1"/>
    <property type="molecule type" value="Genomic_DNA"/>
</dbReference>
<dbReference type="RefSeq" id="WP_012661997.1">
    <property type="nucleotide sequence ID" value="NC_012039.1"/>
</dbReference>
<dbReference type="SMR" id="B9KDH6"/>
<dbReference type="STRING" id="306263.Cla_1297"/>
<dbReference type="KEGG" id="cla:CLA_1297"/>
<dbReference type="eggNOG" id="COG0717">
    <property type="taxonomic scope" value="Bacteria"/>
</dbReference>
<dbReference type="HOGENOM" id="CLU_087476_4_0_7"/>
<dbReference type="UniPathway" id="UPA00610">
    <property type="reaction ID" value="UER00665"/>
</dbReference>
<dbReference type="Proteomes" id="UP000007727">
    <property type="component" value="Chromosome"/>
</dbReference>
<dbReference type="GO" id="GO:0008829">
    <property type="term" value="F:dCTP deaminase activity"/>
    <property type="evidence" value="ECO:0007669"/>
    <property type="project" value="UniProtKB-UniRule"/>
</dbReference>
<dbReference type="GO" id="GO:0000166">
    <property type="term" value="F:nucleotide binding"/>
    <property type="evidence" value="ECO:0007669"/>
    <property type="project" value="UniProtKB-KW"/>
</dbReference>
<dbReference type="GO" id="GO:0006226">
    <property type="term" value="P:dUMP biosynthetic process"/>
    <property type="evidence" value="ECO:0007669"/>
    <property type="project" value="UniProtKB-UniPathway"/>
</dbReference>
<dbReference type="GO" id="GO:0006229">
    <property type="term" value="P:dUTP biosynthetic process"/>
    <property type="evidence" value="ECO:0007669"/>
    <property type="project" value="UniProtKB-UniRule"/>
</dbReference>
<dbReference type="GO" id="GO:0015949">
    <property type="term" value="P:nucleobase-containing small molecule interconversion"/>
    <property type="evidence" value="ECO:0007669"/>
    <property type="project" value="TreeGrafter"/>
</dbReference>
<dbReference type="CDD" id="cd07557">
    <property type="entry name" value="trimeric_dUTPase"/>
    <property type="match status" value="1"/>
</dbReference>
<dbReference type="FunFam" id="2.70.40.10:FF:000001">
    <property type="entry name" value="dCTP deaminase"/>
    <property type="match status" value="1"/>
</dbReference>
<dbReference type="Gene3D" id="2.70.40.10">
    <property type="match status" value="1"/>
</dbReference>
<dbReference type="HAMAP" id="MF_00146">
    <property type="entry name" value="dCTP_deaminase"/>
    <property type="match status" value="1"/>
</dbReference>
<dbReference type="InterPro" id="IPR011962">
    <property type="entry name" value="dCTP_deaminase"/>
</dbReference>
<dbReference type="InterPro" id="IPR036157">
    <property type="entry name" value="dUTPase-like_sf"/>
</dbReference>
<dbReference type="InterPro" id="IPR033704">
    <property type="entry name" value="dUTPase_trimeric"/>
</dbReference>
<dbReference type="NCBIfam" id="TIGR02274">
    <property type="entry name" value="dCTP_deam"/>
    <property type="match status" value="1"/>
</dbReference>
<dbReference type="PANTHER" id="PTHR42680">
    <property type="entry name" value="DCTP DEAMINASE"/>
    <property type="match status" value="1"/>
</dbReference>
<dbReference type="PANTHER" id="PTHR42680:SF3">
    <property type="entry name" value="DCTP DEAMINASE"/>
    <property type="match status" value="1"/>
</dbReference>
<dbReference type="Pfam" id="PF22769">
    <property type="entry name" value="DCD"/>
    <property type="match status" value="1"/>
</dbReference>
<dbReference type="SUPFAM" id="SSF51283">
    <property type="entry name" value="dUTPase-like"/>
    <property type="match status" value="1"/>
</dbReference>
<comment type="function">
    <text evidence="1">Catalyzes the deamination of dCTP to dUTP.</text>
</comment>
<comment type="catalytic activity">
    <reaction evidence="1">
        <text>dCTP + H2O + H(+) = dUTP + NH4(+)</text>
        <dbReference type="Rhea" id="RHEA:22680"/>
        <dbReference type="ChEBI" id="CHEBI:15377"/>
        <dbReference type="ChEBI" id="CHEBI:15378"/>
        <dbReference type="ChEBI" id="CHEBI:28938"/>
        <dbReference type="ChEBI" id="CHEBI:61481"/>
        <dbReference type="ChEBI" id="CHEBI:61555"/>
        <dbReference type="EC" id="3.5.4.13"/>
    </reaction>
</comment>
<comment type="pathway">
    <text evidence="1">Pyrimidine metabolism; dUMP biosynthesis; dUMP from dCTP (dUTP route): step 1/2.</text>
</comment>
<comment type="subunit">
    <text evidence="1">Homotrimer.</text>
</comment>
<comment type="similarity">
    <text evidence="1">Belongs to the dCTP deaminase family.</text>
</comment>